<dbReference type="EC" id="6.3.1.20" evidence="1"/>
<dbReference type="EMBL" id="CP001138">
    <property type="protein sequence ID" value="ACH50548.1"/>
    <property type="molecule type" value="Genomic_DNA"/>
</dbReference>
<dbReference type="RefSeq" id="WP_000209772.1">
    <property type="nucleotide sequence ID" value="NC_011149.1"/>
</dbReference>
<dbReference type="SMR" id="B5F534"/>
<dbReference type="KEGG" id="sea:SeAg_B4899"/>
<dbReference type="HOGENOM" id="CLU_022986_0_1_6"/>
<dbReference type="UniPathway" id="UPA00537">
    <property type="reaction ID" value="UER00594"/>
</dbReference>
<dbReference type="UniPathway" id="UPA00537">
    <property type="reaction ID" value="UER00595"/>
</dbReference>
<dbReference type="Proteomes" id="UP000008819">
    <property type="component" value="Chromosome"/>
</dbReference>
<dbReference type="GO" id="GO:0005829">
    <property type="term" value="C:cytosol"/>
    <property type="evidence" value="ECO:0007669"/>
    <property type="project" value="TreeGrafter"/>
</dbReference>
<dbReference type="GO" id="GO:0005524">
    <property type="term" value="F:ATP binding"/>
    <property type="evidence" value="ECO:0007669"/>
    <property type="project" value="UniProtKB-KW"/>
</dbReference>
<dbReference type="GO" id="GO:0016979">
    <property type="term" value="F:lipoate-protein ligase activity"/>
    <property type="evidence" value="ECO:0007669"/>
    <property type="project" value="UniProtKB-UniRule"/>
</dbReference>
<dbReference type="GO" id="GO:0017118">
    <property type="term" value="F:lipoyltransferase activity"/>
    <property type="evidence" value="ECO:0007669"/>
    <property type="project" value="TreeGrafter"/>
</dbReference>
<dbReference type="GO" id="GO:0036211">
    <property type="term" value="P:protein modification process"/>
    <property type="evidence" value="ECO:0007669"/>
    <property type="project" value="InterPro"/>
</dbReference>
<dbReference type="CDD" id="cd16443">
    <property type="entry name" value="LplA"/>
    <property type="match status" value="1"/>
</dbReference>
<dbReference type="FunFam" id="3.30.390.50:FF:000002">
    <property type="entry name" value="Lipoate-protein ligase A"/>
    <property type="match status" value="1"/>
</dbReference>
<dbReference type="FunFam" id="3.30.930.10:FF:000024">
    <property type="entry name" value="Lipoate-protein ligase A"/>
    <property type="match status" value="1"/>
</dbReference>
<dbReference type="Gene3D" id="3.30.930.10">
    <property type="entry name" value="Bira Bifunctional Protein, Domain 2"/>
    <property type="match status" value="1"/>
</dbReference>
<dbReference type="Gene3D" id="3.30.390.50">
    <property type="entry name" value="CO dehydrogenase flavoprotein, C-terminal domain"/>
    <property type="match status" value="1"/>
</dbReference>
<dbReference type="HAMAP" id="MF_01602">
    <property type="entry name" value="LplA"/>
    <property type="match status" value="1"/>
</dbReference>
<dbReference type="InterPro" id="IPR045864">
    <property type="entry name" value="aa-tRNA-synth_II/BPL/LPL"/>
</dbReference>
<dbReference type="InterPro" id="IPR004143">
    <property type="entry name" value="BPL_LPL_catalytic"/>
</dbReference>
<dbReference type="InterPro" id="IPR023741">
    <property type="entry name" value="Lipoate_ligase_A"/>
</dbReference>
<dbReference type="InterPro" id="IPR019491">
    <property type="entry name" value="Lipoate_protein_ligase_C"/>
</dbReference>
<dbReference type="InterPro" id="IPR004562">
    <property type="entry name" value="LipoylTrfase_LipoateP_Ligase"/>
</dbReference>
<dbReference type="NCBIfam" id="TIGR00545">
    <property type="entry name" value="lipoyltrans"/>
    <property type="match status" value="1"/>
</dbReference>
<dbReference type="PANTHER" id="PTHR12561">
    <property type="entry name" value="LIPOATE-PROTEIN LIGASE"/>
    <property type="match status" value="1"/>
</dbReference>
<dbReference type="PANTHER" id="PTHR12561:SF3">
    <property type="entry name" value="LIPOYLTRANSFERASE 1, MITOCHONDRIAL"/>
    <property type="match status" value="1"/>
</dbReference>
<dbReference type="Pfam" id="PF10437">
    <property type="entry name" value="Lip_prot_lig_C"/>
    <property type="match status" value="1"/>
</dbReference>
<dbReference type="Pfam" id="PF21948">
    <property type="entry name" value="LplA-B_cat"/>
    <property type="match status" value="1"/>
</dbReference>
<dbReference type="SUPFAM" id="SSF55681">
    <property type="entry name" value="Class II aaRS and biotin synthetases"/>
    <property type="match status" value="1"/>
</dbReference>
<dbReference type="SUPFAM" id="SSF82649">
    <property type="entry name" value="SufE/NifU"/>
    <property type="match status" value="1"/>
</dbReference>
<dbReference type="PROSITE" id="PS51733">
    <property type="entry name" value="BPL_LPL_CATALYTIC"/>
    <property type="match status" value="1"/>
</dbReference>
<proteinExistence type="inferred from homology"/>
<protein>
    <recommendedName>
        <fullName evidence="1">Lipoate-protein ligase A</fullName>
        <ecNumber evidence="1">6.3.1.20</ecNumber>
    </recommendedName>
    <alternativeName>
        <fullName evidence="1">Lipoate--protein ligase</fullName>
    </alternativeName>
</protein>
<gene>
    <name evidence="1" type="primary">lplA</name>
    <name type="ordered locus">SeAg_B4899</name>
</gene>
<accession>B5F534</accession>
<sequence>MTTLRLLISDSYDPWFNLAVEECIFRQMPATQRVLFLWRNADTVVIGRAQNPWKECNTRRMEEDNVRLARRSSGGGAVFHDLGNTCFTFMAGKPEYDKTISTHIVLAALNSLGVMADASGRNDLVVKTPDGDRKVSGSAYRETKDRGFHHGTLLLNADLSRLANYLNPDKKKLAAKGITSVRSRVANLTKLLPGITHEQVCQAVTEAFFAHYGERVDAEVISPDKTPDLPNFAETFARQSSWEWNFGQAPAFSHLLDERFTWGGVELHFDVEKGVITRAQVFTDSLNPAPLEALAERLQGCLYRADMLQQACEALLVDFPEQEKELRELSAWIAGAVR</sequence>
<feature type="chain" id="PRO_1000148110" description="Lipoate-protein ligase A">
    <location>
        <begin position="1"/>
        <end position="338"/>
    </location>
</feature>
<feature type="domain" description="BPL/LPL catalytic" evidence="2">
    <location>
        <begin position="29"/>
        <end position="216"/>
    </location>
</feature>
<feature type="binding site" evidence="1">
    <location>
        <position position="71"/>
    </location>
    <ligand>
        <name>ATP</name>
        <dbReference type="ChEBI" id="CHEBI:30616"/>
    </ligand>
</feature>
<feature type="binding site" evidence="1">
    <location>
        <begin position="76"/>
        <end position="79"/>
    </location>
    <ligand>
        <name>ATP</name>
        <dbReference type="ChEBI" id="CHEBI:30616"/>
    </ligand>
</feature>
<feature type="binding site" evidence="1">
    <location>
        <position position="134"/>
    </location>
    <ligand>
        <name>(R)-lipoate</name>
        <dbReference type="ChEBI" id="CHEBI:83088"/>
    </ligand>
</feature>
<feature type="binding site" evidence="1">
    <location>
        <position position="134"/>
    </location>
    <ligand>
        <name>ATP</name>
        <dbReference type="ChEBI" id="CHEBI:30616"/>
    </ligand>
</feature>
<name>LPLA_SALA4</name>
<evidence type="ECO:0000255" key="1">
    <source>
        <dbReference type="HAMAP-Rule" id="MF_01602"/>
    </source>
</evidence>
<evidence type="ECO:0000255" key="2">
    <source>
        <dbReference type="PROSITE-ProRule" id="PRU01067"/>
    </source>
</evidence>
<reference key="1">
    <citation type="journal article" date="2011" name="J. Bacteriol.">
        <title>Comparative genomics of 28 Salmonella enterica isolates: evidence for CRISPR-mediated adaptive sublineage evolution.</title>
        <authorList>
            <person name="Fricke W.F."/>
            <person name="Mammel M.K."/>
            <person name="McDermott P.F."/>
            <person name="Tartera C."/>
            <person name="White D.G."/>
            <person name="Leclerc J.E."/>
            <person name="Ravel J."/>
            <person name="Cebula T.A."/>
        </authorList>
    </citation>
    <scope>NUCLEOTIDE SEQUENCE [LARGE SCALE GENOMIC DNA]</scope>
    <source>
        <strain>SL483</strain>
    </source>
</reference>
<organism>
    <name type="scientific">Salmonella agona (strain SL483)</name>
    <dbReference type="NCBI Taxonomy" id="454166"/>
    <lineage>
        <taxon>Bacteria</taxon>
        <taxon>Pseudomonadati</taxon>
        <taxon>Pseudomonadota</taxon>
        <taxon>Gammaproteobacteria</taxon>
        <taxon>Enterobacterales</taxon>
        <taxon>Enterobacteriaceae</taxon>
        <taxon>Salmonella</taxon>
    </lineage>
</organism>
<keyword id="KW-0067">ATP-binding</keyword>
<keyword id="KW-0963">Cytoplasm</keyword>
<keyword id="KW-0436">Ligase</keyword>
<keyword id="KW-0547">Nucleotide-binding</keyword>
<comment type="function">
    <text evidence="1">Catalyzes both the ATP-dependent activation of exogenously supplied lipoate to lipoyl-AMP and the transfer of the activated lipoyl onto the lipoyl domains of lipoate-dependent enzymes.</text>
</comment>
<comment type="catalytic activity">
    <reaction evidence="1">
        <text>L-lysyl-[lipoyl-carrier protein] + (R)-lipoate + ATP = N(6)-[(R)-lipoyl]-L-lysyl-[lipoyl-carrier protein] + AMP + diphosphate + H(+)</text>
        <dbReference type="Rhea" id="RHEA:49288"/>
        <dbReference type="Rhea" id="RHEA-COMP:10500"/>
        <dbReference type="Rhea" id="RHEA-COMP:10502"/>
        <dbReference type="ChEBI" id="CHEBI:15378"/>
        <dbReference type="ChEBI" id="CHEBI:29969"/>
        <dbReference type="ChEBI" id="CHEBI:30616"/>
        <dbReference type="ChEBI" id="CHEBI:33019"/>
        <dbReference type="ChEBI" id="CHEBI:83088"/>
        <dbReference type="ChEBI" id="CHEBI:83099"/>
        <dbReference type="ChEBI" id="CHEBI:456215"/>
        <dbReference type="EC" id="6.3.1.20"/>
    </reaction>
</comment>
<comment type="pathway">
    <text evidence="1">Protein modification; protein lipoylation via exogenous pathway; protein N(6)-(lipoyl)lysine from lipoate: step 1/2.</text>
</comment>
<comment type="pathway">
    <text evidence="1">Protein modification; protein lipoylation via exogenous pathway; protein N(6)-(lipoyl)lysine from lipoate: step 2/2.</text>
</comment>
<comment type="subunit">
    <text evidence="1">Monomer.</text>
</comment>
<comment type="subcellular location">
    <subcellularLocation>
        <location evidence="1">Cytoplasm</location>
    </subcellularLocation>
</comment>
<comment type="miscellaneous">
    <text evidence="1">In the transfer reaction, the free carboxyl group of lipoic acid is attached via an amide linkage to the epsilon-amino group of a specific lysine residue of lipoyl domains of lipoate-dependent enzymes.</text>
</comment>
<comment type="similarity">
    <text evidence="1">Belongs to the LplA family.</text>
</comment>